<protein>
    <recommendedName>
        <fullName evidence="1">Lipoyl synthase</fullName>
        <ecNumber evidence="1">2.8.1.8</ecNumber>
    </recommendedName>
    <alternativeName>
        <fullName evidence="1">Lip-syn</fullName>
        <shortName evidence="1">LS</shortName>
    </alternativeName>
    <alternativeName>
        <fullName evidence="1">Lipoate synthase</fullName>
    </alternativeName>
    <alternativeName>
        <fullName evidence="1">Lipoic acid synthase</fullName>
    </alternativeName>
    <alternativeName>
        <fullName evidence="1">Sulfur insertion protein LipA</fullName>
    </alternativeName>
</protein>
<sequence>MTNLNKRPDWIKVKAPNSVEYYQTKDLIKNLRLNTVCEEAACPNIGDCWSRKHATVMILGAVCTRACRFCNVKTGRPDLLDPHEPRRLAEAVQKLNLQHVVITSVDRDDLEDGGASHFAECINEIRRSSPNTTIEILTPDFLRKEGAVEIIANAKPDVFNHNVETVPSLYKTIRPGARYYNSLSLLHNIKKLSPEIFTKSGMMVGLGEEINEVVQVMDDLREANVDFLTIGQYLQPTKSHAEIRKYVTPEEFKYLERIAKTKGFLMVSATPLTRSSYHADKDFQKLKGNYNIRLASM</sequence>
<reference key="1">
    <citation type="journal article" date="1997" name="Microbiology">
        <title>Genomic rearrangements during evolution of the obligate intracellular parasite Rickettsia prowazekii as inferred from an analysis of 52015 bp nucleotide sequence.</title>
        <authorList>
            <person name="Andersson J.O."/>
            <person name="Andersson S.G.E."/>
        </authorList>
    </citation>
    <scope>NUCLEOTIDE SEQUENCE [GENOMIC DNA]</scope>
    <source>
        <strain>Madrid E</strain>
    </source>
</reference>
<reference key="2">
    <citation type="journal article" date="1998" name="Nature">
        <title>The genome sequence of Rickettsia prowazekii and the origin of mitochondria.</title>
        <authorList>
            <person name="Andersson S.G.E."/>
            <person name="Zomorodipour A."/>
            <person name="Andersson J.O."/>
            <person name="Sicheritz-Ponten T."/>
            <person name="Alsmark U.C.M."/>
            <person name="Podowski R.M."/>
            <person name="Naeslund A.K."/>
            <person name="Eriksson A.-S."/>
            <person name="Winkler H.H."/>
            <person name="Kurland C.G."/>
        </authorList>
    </citation>
    <scope>NUCLEOTIDE SEQUENCE [LARGE SCALE GENOMIC DNA]</scope>
    <source>
        <strain>Madrid E</strain>
    </source>
</reference>
<accession>O05959</accession>
<keyword id="KW-0004">4Fe-4S</keyword>
<keyword id="KW-0963">Cytoplasm</keyword>
<keyword id="KW-0408">Iron</keyword>
<keyword id="KW-0411">Iron-sulfur</keyword>
<keyword id="KW-0479">Metal-binding</keyword>
<keyword id="KW-1185">Reference proteome</keyword>
<keyword id="KW-0949">S-adenosyl-L-methionine</keyword>
<keyword id="KW-0808">Transferase</keyword>
<proteinExistence type="inferred from homology"/>
<gene>
    <name evidence="1" type="primary">lipA</name>
    <name type="ordered locus">RP742</name>
</gene>
<dbReference type="EC" id="2.8.1.8" evidence="1"/>
<dbReference type="EMBL" id="Y11778">
    <property type="protein sequence ID" value="CAA72454.1"/>
    <property type="molecule type" value="Genomic_DNA"/>
</dbReference>
<dbReference type="EMBL" id="AJ235273">
    <property type="protein sequence ID" value="CAA15170.1"/>
    <property type="molecule type" value="Genomic_DNA"/>
</dbReference>
<dbReference type="PIR" id="B71634">
    <property type="entry name" value="B71634"/>
</dbReference>
<dbReference type="RefSeq" id="NP_221094.1">
    <property type="nucleotide sequence ID" value="NC_000963.1"/>
</dbReference>
<dbReference type="RefSeq" id="WP_004597018.1">
    <property type="nucleotide sequence ID" value="NC_000963.1"/>
</dbReference>
<dbReference type="SMR" id="O05959"/>
<dbReference type="STRING" id="272947.gene:17555812"/>
<dbReference type="EnsemblBacteria" id="CAA15170">
    <property type="protein sequence ID" value="CAA15170"/>
    <property type="gene ID" value="CAA15170"/>
</dbReference>
<dbReference type="GeneID" id="57569863"/>
<dbReference type="KEGG" id="rpr:RP742"/>
<dbReference type="PATRIC" id="fig|272947.5.peg.775"/>
<dbReference type="eggNOG" id="COG0320">
    <property type="taxonomic scope" value="Bacteria"/>
</dbReference>
<dbReference type="HOGENOM" id="CLU_033144_2_1_5"/>
<dbReference type="OrthoDB" id="9787898at2"/>
<dbReference type="UniPathway" id="UPA00538">
    <property type="reaction ID" value="UER00593"/>
</dbReference>
<dbReference type="Proteomes" id="UP000002480">
    <property type="component" value="Chromosome"/>
</dbReference>
<dbReference type="GO" id="GO:0005737">
    <property type="term" value="C:cytoplasm"/>
    <property type="evidence" value="ECO:0007669"/>
    <property type="project" value="UniProtKB-SubCell"/>
</dbReference>
<dbReference type="GO" id="GO:0051539">
    <property type="term" value="F:4 iron, 4 sulfur cluster binding"/>
    <property type="evidence" value="ECO:0007669"/>
    <property type="project" value="UniProtKB-UniRule"/>
</dbReference>
<dbReference type="GO" id="GO:0016992">
    <property type="term" value="F:lipoate synthase activity"/>
    <property type="evidence" value="ECO:0007669"/>
    <property type="project" value="UniProtKB-UniRule"/>
</dbReference>
<dbReference type="GO" id="GO:0046872">
    <property type="term" value="F:metal ion binding"/>
    <property type="evidence" value="ECO:0007669"/>
    <property type="project" value="UniProtKB-KW"/>
</dbReference>
<dbReference type="CDD" id="cd01335">
    <property type="entry name" value="Radical_SAM"/>
    <property type="match status" value="1"/>
</dbReference>
<dbReference type="FunFam" id="3.20.20.70:FF:000040">
    <property type="entry name" value="Lipoyl synthase"/>
    <property type="match status" value="1"/>
</dbReference>
<dbReference type="Gene3D" id="3.20.20.70">
    <property type="entry name" value="Aldolase class I"/>
    <property type="match status" value="1"/>
</dbReference>
<dbReference type="HAMAP" id="MF_00206">
    <property type="entry name" value="Lipoyl_synth"/>
    <property type="match status" value="1"/>
</dbReference>
<dbReference type="InterPro" id="IPR013785">
    <property type="entry name" value="Aldolase_TIM"/>
</dbReference>
<dbReference type="InterPro" id="IPR006638">
    <property type="entry name" value="Elp3/MiaA/NifB-like_rSAM"/>
</dbReference>
<dbReference type="InterPro" id="IPR031691">
    <property type="entry name" value="LIAS_N"/>
</dbReference>
<dbReference type="InterPro" id="IPR003698">
    <property type="entry name" value="Lipoyl_synth"/>
</dbReference>
<dbReference type="InterPro" id="IPR007197">
    <property type="entry name" value="rSAM"/>
</dbReference>
<dbReference type="NCBIfam" id="TIGR00510">
    <property type="entry name" value="lipA"/>
    <property type="match status" value="1"/>
</dbReference>
<dbReference type="NCBIfam" id="NF004019">
    <property type="entry name" value="PRK05481.1"/>
    <property type="match status" value="1"/>
</dbReference>
<dbReference type="NCBIfam" id="NF009544">
    <property type="entry name" value="PRK12928.1"/>
    <property type="match status" value="1"/>
</dbReference>
<dbReference type="PANTHER" id="PTHR10949">
    <property type="entry name" value="LIPOYL SYNTHASE"/>
    <property type="match status" value="1"/>
</dbReference>
<dbReference type="PANTHER" id="PTHR10949:SF0">
    <property type="entry name" value="LIPOYL SYNTHASE, MITOCHONDRIAL"/>
    <property type="match status" value="1"/>
</dbReference>
<dbReference type="Pfam" id="PF16881">
    <property type="entry name" value="LIAS_N"/>
    <property type="match status" value="1"/>
</dbReference>
<dbReference type="Pfam" id="PF04055">
    <property type="entry name" value="Radical_SAM"/>
    <property type="match status" value="1"/>
</dbReference>
<dbReference type="PIRSF" id="PIRSF005963">
    <property type="entry name" value="Lipoyl_synth"/>
    <property type="match status" value="1"/>
</dbReference>
<dbReference type="SFLD" id="SFLDF00271">
    <property type="entry name" value="lipoyl_synthase"/>
    <property type="match status" value="1"/>
</dbReference>
<dbReference type="SFLD" id="SFLDS00029">
    <property type="entry name" value="Radical_SAM"/>
    <property type="match status" value="1"/>
</dbReference>
<dbReference type="SMART" id="SM00729">
    <property type="entry name" value="Elp3"/>
    <property type="match status" value="1"/>
</dbReference>
<dbReference type="SUPFAM" id="SSF102114">
    <property type="entry name" value="Radical SAM enzymes"/>
    <property type="match status" value="1"/>
</dbReference>
<dbReference type="PROSITE" id="PS51918">
    <property type="entry name" value="RADICAL_SAM"/>
    <property type="match status" value="1"/>
</dbReference>
<evidence type="ECO:0000255" key="1">
    <source>
        <dbReference type="HAMAP-Rule" id="MF_00206"/>
    </source>
</evidence>
<evidence type="ECO:0000255" key="2">
    <source>
        <dbReference type="PROSITE-ProRule" id="PRU01266"/>
    </source>
</evidence>
<organism>
    <name type="scientific">Rickettsia prowazekii (strain Madrid E)</name>
    <dbReference type="NCBI Taxonomy" id="272947"/>
    <lineage>
        <taxon>Bacteria</taxon>
        <taxon>Pseudomonadati</taxon>
        <taxon>Pseudomonadota</taxon>
        <taxon>Alphaproteobacteria</taxon>
        <taxon>Rickettsiales</taxon>
        <taxon>Rickettsiaceae</taxon>
        <taxon>Rickettsieae</taxon>
        <taxon>Rickettsia</taxon>
        <taxon>typhus group</taxon>
    </lineage>
</organism>
<feature type="chain" id="PRO_0000102352" description="Lipoyl synthase">
    <location>
        <begin position="1"/>
        <end position="297"/>
    </location>
</feature>
<feature type="domain" description="Radical SAM core" evidence="2">
    <location>
        <begin position="49"/>
        <end position="265"/>
    </location>
</feature>
<feature type="binding site" evidence="1">
    <location>
        <position position="37"/>
    </location>
    <ligand>
        <name>[4Fe-4S] cluster</name>
        <dbReference type="ChEBI" id="CHEBI:49883"/>
        <label>1</label>
    </ligand>
</feature>
<feature type="binding site" evidence="1">
    <location>
        <position position="42"/>
    </location>
    <ligand>
        <name>[4Fe-4S] cluster</name>
        <dbReference type="ChEBI" id="CHEBI:49883"/>
        <label>1</label>
    </ligand>
</feature>
<feature type="binding site" evidence="1">
    <location>
        <position position="48"/>
    </location>
    <ligand>
        <name>[4Fe-4S] cluster</name>
        <dbReference type="ChEBI" id="CHEBI:49883"/>
        <label>1</label>
    </ligand>
</feature>
<feature type="binding site" evidence="1">
    <location>
        <position position="63"/>
    </location>
    <ligand>
        <name>[4Fe-4S] cluster</name>
        <dbReference type="ChEBI" id="CHEBI:49883"/>
        <label>2</label>
        <note>4Fe-4S-S-AdoMet</note>
    </ligand>
</feature>
<feature type="binding site" evidence="1">
    <location>
        <position position="67"/>
    </location>
    <ligand>
        <name>[4Fe-4S] cluster</name>
        <dbReference type="ChEBI" id="CHEBI:49883"/>
        <label>2</label>
        <note>4Fe-4S-S-AdoMet</note>
    </ligand>
</feature>
<feature type="binding site" evidence="1">
    <location>
        <position position="70"/>
    </location>
    <ligand>
        <name>[4Fe-4S] cluster</name>
        <dbReference type="ChEBI" id="CHEBI:49883"/>
        <label>2</label>
        <note>4Fe-4S-S-AdoMet</note>
    </ligand>
</feature>
<feature type="binding site" evidence="1">
    <location>
        <position position="276"/>
    </location>
    <ligand>
        <name>[4Fe-4S] cluster</name>
        <dbReference type="ChEBI" id="CHEBI:49883"/>
        <label>1</label>
    </ligand>
</feature>
<comment type="function">
    <text evidence="1">Catalyzes the radical-mediated insertion of two sulfur atoms into the C-6 and C-8 positions of the octanoyl moiety bound to the lipoyl domains of lipoate-dependent enzymes, thereby converting the octanoylated domains into lipoylated derivatives.</text>
</comment>
<comment type="catalytic activity">
    <reaction evidence="1">
        <text>[[Fe-S] cluster scaffold protein carrying a second [4Fe-4S](2+) cluster] + N(6)-octanoyl-L-lysyl-[protein] + 2 oxidized [2Fe-2S]-[ferredoxin] + 2 S-adenosyl-L-methionine + 4 H(+) = [[Fe-S] cluster scaffold protein] + N(6)-[(R)-dihydrolipoyl]-L-lysyl-[protein] + 4 Fe(3+) + 2 hydrogen sulfide + 2 5'-deoxyadenosine + 2 L-methionine + 2 reduced [2Fe-2S]-[ferredoxin]</text>
        <dbReference type="Rhea" id="RHEA:16585"/>
        <dbReference type="Rhea" id="RHEA-COMP:9928"/>
        <dbReference type="Rhea" id="RHEA-COMP:10000"/>
        <dbReference type="Rhea" id="RHEA-COMP:10001"/>
        <dbReference type="Rhea" id="RHEA-COMP:10475"/>
        <dbReference type="Rhea" id="RHEA-COMP:14568"/>
        <dbReference type="Rhea" id="RHEA-COMP:14569"/>
        <dbReference type="ChEBI" id="CHEBI:15378"/>
        <dbReference type="ChEBI" id="CHEBI:17319"/>
        <dbReference type="ChEBI" id="CHEBI:29034"/>
        <dbReference type="ChEBI" id="CHEBI:29919"/>
        <dbReference type="ChEBI" id="CHEBI:33722"/>
        <dbReference type="ChEBI" id="CHEBI:33737"/>
        <dbReference type="ChEBI" id="CHEBI:33738"/>
        <dbReference type="ChEBI" id="CHEBI:57844"/>
        <dbReference type="ChEBI" id="CHEBI:59789"/>
        <dbReference type="ChEBI" id="CHEBI:78809"/>
        <dbReference type="ChEBI" id="CHEBI:83100"/>
        <dbReference type="EC" id="2.8.1.8"/>
    </reaction>
</comment>
<comment type="cofactor">
    <cofactor evidence="1">
        <name>[4Fe-4S] cluster</name>
        <dbReference type="ChEBI" id="CHEBI:49883"/>
    </cofactor>
    <text evidence="1">Binds 2 [4Fe-4S] clusters per subunit. One cluster is coordinated with 3 cysteines and an exchangeable S-adenosyl-L-methionine.</text>
</comment>
<comment type="pathway">
    <text evidence="1">Protein modification; protein lipoylation via endogenous pathway; protein N(6)-(lipoyl)lysine from octanoyl-[acyl-carrier-protein]: step 2/2.</text>
</comment>
<comment type="subcellular location">
    <subcellularLocation>
        <location evidence="1">Cytoplasm</location>
    </subcellularLocation>
</comment>
<comment type="similarity">
    <text evidence="1">Belongs to the radical SAM superfamily. Lipoyl synthase family.</text>
</comment>
<name>LIPA_RICPR</name>